<protein>
    <recommendedName>
        <fullName>Opacity protein opA67</fullName>
    </recommendedName>
</protein>
<reference key="1">
    <citation type="journal article" date="1993" name="EMBO J.">
        <title>Variable opacity (Opa) outer membrane proteins account for the cell tropisms displayed by Neisseria gonorrhoeae for human leukocytes and epithelial cells.</title>
        <authorList>
            <person name="Kupsch E.-M."/>
            <person name="Knepper B."/>
            <person name="Kuroki T."/>
            <person name="Heuer I."/>
            <person name="Meyer T.F."/>
        </authorList>
    </citation>
    <scope>NUCLEOTIDE SEQUENCE [GENOMIC DNA]</scope>
    <source>
        <strain>VP1</strain>
    </source>
</reference>
<proteinExistence type="inferred from homology"/>
<dbReference type="EMBL" id="Z18942">
    <property type="protein sequence ID" value="CAA79375.1"/>
    <property type="molecule type" value="Genomic_DNA"/>
</dbReference>
<dbReference type="PIR" id="S36350">
    <property type="entry name" value="S36350"/>
</dbReference>
<dbReference type="SMR" id="Q05034"/>
<dbReference type="Reactome" id="R-HSA-202733">
    <property type="pathway name" value="Cell surface interactions at the vascular wall"/>
</dbReference>
<dbReference type="GO" id="GO:0009279">
    <property type="term" value="C:cell outer membrane"/>
    <property type="evidence" value="ECO:0000304"/>
    <property type="project" value="Reactome"/>
</dbReference>
<dbReference type="GO" id="GO:0015288">
    <property type="term" value="F:porin activity"/>
    <property type="evidence" value="ECO:0007669"/>
    <property type="project" value="InterPro"/>
</dbReference>
<dbReference type="FunFam" id="2.40.160.20:FF:000005">
    <property type="entry name" value="Opacity protein opA54"/>
    <property type="match status" value="1"/>
</dbReference>
<dbReference type="Gene3D" id="2.40.160.20">
    <property type="match status" value="1"/>
</dbReference>
<dbReference type="InterPro" id="IPR006315">
    <property type="entry name" value="OM_autotransptr_brl_dom"/>
</dbReference>
<dbReference type="InterPro" id="IPR011250">
    <property type="entry name" value="OMP/PagP_b-brl"/>
</dbReference>
<dbReference type="InterPro" id="IPR003394">
    <property type="entry name" value="Porin_opacity"/>
</dbReference>
<dbReference type="NCBIfam" id="TIGR01414">
    <property type="entry name" value="autotrans_barl"/>
    <property type="match status" value="1"/>
</dbReference>
<dbReference type="Pfam" id="PF02462">
    <property type="entry name" value="Opacity"/>
    <property type="match status" value="1"/>
</dbReference>
<dbReference type="SUPFAM" id="SSF56925">
    <property type="entry name" value="OMPA-like"/>
    <property type="match status" value="1"/>
</dbReference>
<sequence>ASEGNGRGPYVQADLAYAAERITHDYPEATAQKKGTTISTVSDYFRNIRTHSVHPRVSVGYDFGGWRIAADYARYRKWNNSKYSVSIKKLQNQYNKKTENQENGTFHAASSLGLSAVYDFKLNDKFKPYIGARVAYGHVRHSIDSTKKTTGFLTTAGARGAAPTVSSPYKNTQDAHQESNSIRRVGLGVIAGVGFDITPNLTLDAGYRYHNWGRLENTRFKTHEASLGVRYRF</sequence>
<feature type="signal peptide" evidence="1">
    <location>
        <begin position="1" status="less than"/>
        <end position="1"/>
    </location>
</feature>
<feature type="chain" id="PRO_0000021903" description="Opacity protein opA67">
    <location>
        <begin position="2"/>
        <end position="233" status="greater than"/>
    </location>
</feature>
<feature type="non-terminal residue">
    <location>
        <position position="1"/>
    </location>
</feature>
<feature type="non-terminal residue">
    <location>
        <position position="233"/>
    </location>
</feature>
<accession>Q05034</accession>
<organism>
    <name type="scientific">Neisseria gonorrhoeae</name>
    <dbReference type="NCBI Taxonomy" id="485"/>
    <lineage>
        <taxon>Bacteria</taxon>
        <taxon>Pseudomonadati</taxon>
        <taxon>Pseudomonadota</taxon>
        <taxon>Betaproteobacteria</taxon>
        <taxon>Neisseriales</taxon>
        <taxon>Neisseriaceae</taxon>
        <taxon>Neisseria</taxon>
    </lineage>
</organism>
<name>OPA67_NEIGO</name>
<keyword id="KW-0998">Cell outer membrane</keyword>
<keyword id="KW-0472">Membrane</keyword>
<keyword id="KW-0732">Signal</keyword>
<keyword id="KW-0812">Transmembrane</keyword>
<keyword id="KW-1134">Transmembrane beta strand</keyword>
<evidence type="ECO:0000255" key="1"/>
<evidence type="ECO:0000305" key="2"/>
<comment type="function">
    <text>Implicated in a number of adherence functions. OPA proteins are implicated in pathogenesis and are subject to phase variation.</text>
</comment>
<comment type="subcellular location">
    <subcellularLocation>
        <location>Cell outer membrane</location>
    </subcellularLocation>
</comment>
<comment type="similarity">
    <text evidence="2">Belongs to the opacity porin family.</text>
</comment>